<accession>Q813W6</accession>
<proteinExistence type="inferred from homology"/>
<comment type="function">
    <text evidence="1">Negative regulator of protease production and sporulation.</text>
</comment>
<comment type="subunit">
    <text evidence="1">Homodimer.</text>
</comment>
<sequence>MKSGEKDYSVKEAMIFSQRIAQLSKALWKCVEKDWQQWIKPYDLNINEHHILTIAYHLKGASISEIAKFGVMHVSTAFNFSKKLEERGYLVFSKKEDDKRNTYIEITDKGEELLLRLMEEYDPENNSVFNGALALRNFYGKFPENIELIAILRNIYGQDFIDIFEKSLEDIEENFTESDQKLVKK</sequence>
<dbReference type="EMBL" id="AE016877">
    <property type="protein sequence ID" value="AAP08034.1"/>
    <property type="molecule type" value="Genomic_DNA"/>
</dbReference>
<dbReference type="RefSeq" id="NP_830833.1">
    <property type="nucleotide sequence ID" value="NC_004722.1"/>
</dbReference>
<dbReference type="RefSeq" id="WP_000834924.1">
    <property type="nucleotide sequence ID" value="NZ_CP138336.1"/>
</dbReference>
<dbReference type="SMR" id="Q813W6"/>
<dbReference type="STRING" id="226900.BC_1047"/>
<dbReference type="KEGG" id="bce:BC1047"/>
<dbReference type="PATRIC" id="fig|226900.8.peg.1004"/>
<dbReference type="HOGENOM" id="CLU_115790_0_0_9"/>
<dbReference type="OrthoDB" id="2393954at2"/>
<dbReference type="Proteomes" id="UP000001417">
    <property type="component" value="Chromosome"/>
</dbReference>
<dbReference type="GO" id="GO:0003677">
    <property type="term" value="F:DNA binding"/>
    <property type="evidence" value="ECO:0007669"/>
    <property type="project" value="UniProtKB-UniRule"/>
</dbReference>
<dbReference type="GO" id="GO:0003700">
    <property type="term" value="F:DNA-binding transcription factor activity"/>
    <property type="evidence" value="ECO:0007669"/>
    <property type="project" value="UniProtKB-UniRule"/>
</dbReference>
<dbReference type="GO" id="GO:0045892">
    <property type="term" value="P:negative regulation of DNA-templated transcription"/>
    <property type="evidence" value="ECO:0007669"/>
    <property type="project" value="UniProtKB-UniRule"/>
</dbReference>
<dbReference type="GO" id="GO:0006355">
    <property type="term" value="P:regulation of DNA-templated transcription"/>
    <property type="evidence" value="ECO:0000318"/>
    <property type="project" value="GO_Central"/>
</dbReference>
<dbReference type="GO" id="GO:0006950">
    <property type="term" value="P:response to stress"/>
    <property type="evidence" value="ECO:0000318"/>
    <property type="project" value="GO_Central"/>
</dbReference>
<dbReference type="GO" id="GO:0030435">
    <property type="term" value="P:sporulation resulting in formation of a cellular spore"/>
    <property type="evidence" value="ECO:0007669"/>
    <property type="project" value="UniProtKB-UniRule"/>
</dbReference>
<dbReference type="FunFam" id="1.10.10.10:FF:000194">
    <property type="entry name" value="HTH-type transcriptional regulator Hpr"/>
    <property type="match status" value="1"/>
</dbReference>
<dbReference type="Gene3D" id="1.10.10.10">
    <property type="entry name" value="Winged helix-like DNA-binding domain superfamily/Winged helix DNA-binding domain"/>
    <property type="match status" value="1"/>
</dbReference>
<dbReference type="HAMAP" id="MF_01911">
    <property type="entry name" value="HTH_type_Hpr"/>
    <property type="match status" value="1"/>
</dbReference>
<dbReference type="InterPro" id="IPR000835">
    <property type="entry name" value="HTH_MarR-typ"/>
</dbReference>
<dbReference type="InterPro" id="IPR023488">
    <property type="entry name" value="HTH_tscrpt_reg_Hpr"/>
</dbReference>
<dbReference type="InterPro" id="IPR039422">
    <property type="entry name" value="MarR/SlyA-like"/>
</dbReference>
<dbReference type="InterPro" id="IPR023187">
    <property type="entry name" value="Tscrpt_reg_MarR-type_CS"/>
</dbReference>
<dbReference type="InterPro" id="IPR036388">
    <property type="entry name" value="WH-like_DNA-bd_sf"/>
</dbReference>
<dbReference type="InterPro" id="IPR036390">
    <property type="entry name" value="WH_DNA-bd_sf"/>
</dbReference>
<dbReference type="NCBIfam" id="NF010349">
    <property type="entry name" value="PRK13777.1"/>
    <property type="match status" value="1"/>
</dbReference>
<dbReference type="PANTHER" id="PTHR33164:SF58">
    <property type="entry name" value="DNA-BINDING TRANSCRIPTIONAL REPRESSOR SCOC"/>
    <property type="match status" value="1"/>
</dbReference>
<dbReference type="PANTHER" id="PTHR33164">
    <property type="entry name" value="TRANSCRIPTIONAL REGULATOR, MARR FAMILY"/>
    <property type="match status" value="1"/>
</dbReference>
<dbReference type="Pfam" id="PF01047">
    <property type="entry name" value="MarR"/>
    <property type="match status" value="1"/>
</dbReference>
<dbReference type="SMART" id="SM00347">
    <property type="entry name" value="HTH_MARR"/>
    <property type="match status" value="1"/>
</dbReference>
<dbReference type="SUPFAM" id="SSF46785">
    <property type="entry name" value="Winged helix' DNA-binding domain"/>
    <property type="match status" value="1"/>
</dbReference>
<dbReference type="PROSITE" id="PS01117">
    <property type="entry name" value="HTH_MARR_1"/>
    <property type="match status" value="1"/>
</dbReference>
<dbReference type="PROSITE" id="PS50995">
    <property type="entry name" value="HTH_MARR_2"/>
    <property type="match status" value="1"/>
</dbReference>
<evidence type="ECO:0000255" key="1">
    <source>
        <dbReference type="HAMAP-Rule" id="MF_01911"/>
    </source>
</evidence>
<keyword id="KW-0238">DNA-binding</keyword>
<keyword id="KW-1185">Reference proteome</keyword>
<keyword id="KW-0678">Repressor</keyword>
<keyword id="KW-0749">Sporulation</keyword>
<keyword id="KW-0804">Transcription</keyword>
<keyword id="KW-0805">Transcription regulation</keyword>
<protein>
    <recommendedName>
        <fullName evidence="1">HTH-type transcriptional regulator Hpr</fullName>
    </recommendedName>
    <alternativeName>
        <fullName evidence="1">Protease production regulatory protein Hpr</fullName>
    </alternativeName>
</protein>
<name>HPR_BACCR</name>
<gene>
    <name evidence="1" type="primary">hpr</name>
    <name type="ordered locus">BC_1047</name>
</gene>
<organism>
    <name type="scientific">Bacillus cereus (strain ATCC 14579 / DSM 31 / CCUG 7414 / JCM 2152 / NBRC 15305 / NCIMB 9373 / NCTC 2599 / NRRL B-3711)</name>
    <dbReference type="NCBI Taxonomy" id="226900"/>
    <lineage>
        <taxon>Bacteria</taxon>
        <taxon>Bacillati</taxon>
        <taxon>Bacillota</taxon>
        <taxon>Bacilli</taxon>
        <taxon>Bacillales</taxon>
        <taxon>Bacillaceae</taxon>
        <taxon>Bacillus</taxon>
        <taxon>Bacillus cereus group</taxon>
    </lineage>
</organism>
<feature type="chain" id="PRO_0000343619" description="HTH-type transcriptional regulator Hpr">
    <location>
        <begin position="1"/>
        <end position="185"/>
    </location>
</feature>
<feature type="domain" description="HTH marR-type" evidence="1">
    <location>
        <begin position="13"/>
        <end position="157"/>
    </location>
</feature>
<feature type="DNA-binding region" description="H-T-H motif" evidence="1">
    <location>
        <begin position="63"/>
        <end position="86"/>
    </location>
</feature>
<reference key="1">
    <citation type="journal article" date="2003" name="Nature">
        <title>Genome sequence of Bacillus cereus and comparative analysis with Bacillus anthracis.</title>
        <authorList>
            <person name="Ivanova N."/>
            <person name="Sorokin A."/>
            <person name="Anderson I."/>
            <person name="Galleron N."/>
            <person name="Candelon B."/>
            <person name="Kapatral V."/>
            <person name="Bhattacharyya A."/>
            <person name="Reznik G."/>
            <person name="Mikhailova N."/>
            <person name="Lapidus A."/>
            <person name="Chu L."/>
            <person name="Mazur M."/>
            <person name="Goltsman E."/>
            <person name="Larsen N."/>
            <person name="D'Souza M."/>
            <person name="Walunas T."/>
            <person name="Grechkin Y."/>
            <person name="Pusch G."/>
            <person name="Haselkorn R."/>
            <person name="Fonstein M."/>
            <person name="Ehrlich S.D."/>
            <person name="Overbeek R."/>
            <person name="Kyrpides N.C."/>
        </authorList>
    </citation>
    <scope>NUCLEOTIDE SEQUENCE [LARGE SCALE GENOMIC DNA]</scope>
    <source>
        <strain>ATCC 14579 / DSM 31 / CCUG 7414 / JCM 2152 / NBRC 15305 / NCIMB 9373 / NCTC 2599 / NRRL B-3711</strain>
    </source>
</reference>